<proteinExistence type="inferred from homology"/>
<name>DCD_DECAR</name>
<reference key="1">
    <citation type="journal article" date="2009" name="BMC Genomics">
        <title>Metabolic analysis of the soil microbe Dechloromonas aromatica str. RCB: indications of a surprisingly complex life-style and cryptic anaerobic pathways for aromatic degradation.</title>
        <authorList>
            <person name="Salinero K.K."/>
            <person name="Keller K."/>
            <person name="Feil W.S."/>
            <person name="Feil H."/>
            <person name="Trong S."/>
            <person name="Di Bartolo G."/>
            <person name="Lapidus A."/>
        </authorList>
    </citation>
    <scope>NUCLEOTIDE SEQUENCE [LARGE SCALE GENOMIC DNA]</scope>
    <source>
        <strain>RCB</strain>
    </source>
</reference>
<comment type="function">
    <text evidence="1">Catalyzes the deamination of dCTP to dUTP.</text>
</comment>
<comment type="catalytic activity">
    <reaction evidence="1">
        <text>dCTP + H2O + H(+) = dUTP + NH4(+)</text>
        <dbReference type="Rhea" id="RHEA:22680"/>
        <dbReference type="ChEBI" id="CHEBI:15377"/>
        <dbReference type="ChEBI" id="CHEBI:15378"/>
        <dbReference type="ChEBI" id="CHEBI:28938"/>
        <dbReference type="ChEBI" id="CHEBI:61481"/>
        <dbReference type="ChEBI" id="CHEBI:61555"/>
        <dbReference type="EC" id="3.5.4.13"/>
    </reaction>
</comment>
<comment type="pathway">
    <text evidence="1">Pyrimidine metabolism; dUMP biosynthesis; dUMP from dCTP (dUTP route): step 1/2.</text>
</comment>
<comment type="subunit">
    <text evidence="1">Homotrimer.</text>
</comment>
<comment type="similarity">
    <text evidence="1">Belongs to the dCTP deaminase family.</text>
</comment>
<evidence type="ECO:0000255" key="1">
    <source>
        <dbReference type="HAMAP-Rule" id="MF_00146"/>
    </source>
</evidence>
<dbReference type="EC" id="3.5.4.13" evidence="1"/>
<dbReference type="EMBL" id="CP000089">
    <property type="protein sequence ID" value="AAZ45334.1"/>
    <property type="molecule type" value="Genomic_DNA"/>
</dbReference>
<dbReference type="SMR" id="Q47IJ7"/>
<dbReference type="STRING" id="159087.Daro_0577"/>
<dbReference type="KEGG" id="dar:Daro_0577"/>
<dbReference type="eggNOG" id="COG0717">
    <property type="taxonomic scope" value="Bacteria"/>
</dbReference>
<dbReference type="HOGENOM" id="CLU_087476_4_0_4"/>
<dbReference type="OrthoDB" id="9780956at2"/>
<dbReference type="UniPathway" id="UPA00610">
    <property type="reaction ID" value="UER00665"/>
</dbReference>
<dbReference type="GO" id="GO:0008829">
    <property type="term" value="F:dCTP deaminase activity"/>
    <property type="evidence" value="ECO:0007669"/>
    <property type="project" value="UniProtKB-UniRule"/>
</dbReference>
<dbReference type="GO" id="GO:0000166">
    <property type="term" value="F:nucleotide binding"/>
    <property type="evidence" value="ECO:0007669"/>
    <property type="project" value="UniProtKB-KW"/>
</dbReference>
<dbReference type="GO" id="GO:0006226">
    <property type="term" value="P:dUMP biosynthetic process"/>
    <property type="evidence" value="ECO:0007669"/>
    <property type="project" value="UniProtKB-UniPathway"/>
</dbReference>
<dbReference type="GO" id="GO:0006229">
    <property type="term" value="P:dUTP biosynthetic process"/>
    <property type="evidence" value="ECO:0007669"/>
    <property type="project" value="UniProtKB-UniRule"/>
</dbReference>
<dbReference type="GO" id="GO:0015949">
    <property type="term" value="P:nucleobase-containing small molecule interconversion"/>
    <property type="evidence" value="ECO:0007669"/>
    <property type="project" value="TreeGrafter"/>
</dbReference>
<dbReference type="CDD" id="cd07557">
    <property type="entry name" value="trimeric_dUTPase"/>
    <property type="match status" value="1"/>
</dbReference>
<dbReference type="FunFam" id="2.70.40.10:FF:000001">
    <property type="entry name" value="dCTP deaminase"/>
    <property type="match status" value="1"/>
</dbReference>
<dbReference type="Gene3D" id="2.70.40.10">
    <property type="match status" value="1"/>
</dbReference>
<dbReference type="HAMAP" id="MF_00146">
    <property type="entry name" value="dCTP_deaminase"/>
    <property type="match status" value="1"/>
</dbReference>
<dbReference type="InterPro" id="IPR011962">
    <property type="entry name" value="dCTP_deaminase"/>
</dbReference>
<dbReference type="InterPro" id="IPR036157">
    <property type="entry name" value="dUTPase-like_sf"/>
</dbReference>
<dbReference type="InterPro" id="IPR033704">
    <property type="entry name" value="dUTPase_trimeric"/>
</dbReference>
<dbReference type="NCBIfam" id="TIGR02274">
    <property type="entry name" value="dCTP_deam"/>
    <property type="match status" value="1"/>
</dbReference>
<dbReference type="PANTHER" id="PTHR42680">
    <property type="entry name" value="DCTP DEAMINASE"/>
    <property type="match status" value="1"/>
</dbReference>
<dbReference type="PANTHER" id="PTHR42680:SF3">
    <property type="entry name" value="DCTP DEAMINASE"/>
    <property type="match status" value="1"/>
</dbReference>
<dbReference type="Pfam" id="PF22769">
    <property type="entry name" value="DCD"/>
    <property type="match status" value="1"/>
</dbReference>
<dbReference type="SUPFAM" id="SSF51283">
    <property type="entry name" value="dUTPase-like"/>
    <property type="match status" value="1"/>
</dbReference>
<organism>
    <name type="scientific">Dechloromonas aromatica (strain RCB)</name>
    <dbReference type="NCBI Taxonomy" id="159087"/>
    <lineage>
        <taxon>Bacteria</taxon>
        <taxon>Pseudomonadati</taxon>
        <taxon>Pseudomonadota</taxon>
        <taxon>Betaproteobacteria</taxon>
        <taxon>Rhodocyclales</taxon>
        <taxon>Azonexaceae</taxon>
        <taxon>Dechloromonas</taxon>
    </lineage>
</organism>
<gene>
    <name evidence="1" type="primary">dcd</name>
    <name type="ordered locus">Daro_0577</name>
</gene>
<feature type="chain" id="PRO_1000009714" description="dCTP deaminase">
    <location>
        <begin position="1"/>
        <end position="188"/>
    </location>
</feature>
<feature type="active site" description="Proton donor/acceptor" evidence="1">
    <location>
        <position position="137"/>
    </location>
</feature>
<feature type="binding site" evidence="1">
    <location>
        <begin position="111"/>
        <end position="116"/>
    </location>
    <ligand>
        <name>dCTP</name>
        <dbReference type="ChEBI" id="CHEBI:61481"/>
    </ligand>
</feature>
<feature type="binding site" evidence="1">
    <location>
        <begin position="135"/>
        <end position="137"/>
    </location>
    <ligand>
        <name>dCTP</name>
        <dbReference type="ChEBI" id="CHEBI:61481"/>
    </ligand>
</feature>
<feature type="binding site" evidence="1">
    <location>
        <position position="156"/>
    </location>
    <ligand>
        <name>dCTP</name>
        <dbReference type="ChEBI" id="CHEBI:61481"/>
    </ligand>
</feature>
<feature type="binding site" evidence="1">
    <location>
        <position position="170"/>
    </location>
    <ligand>
        <name>dCTP</name>
        <dbReference type="ChEBI" id="CHEBI:61481"/>
    </ligand>
</feature>
<feature type="binding site" evidence="1">
    <location>
        <position position="180"/>
    </location>
    <ligand>
        <name>dCTP</name>
        <dbReference type="ChEBI" id="CHEBI:61481"/>
    </ligand>
</feature>
<sequence length="188" mass="21158">MTIKSDKWIRRMAAEHGMIEPFSPELVREANGQKIVSYGTSSYGYDIRCAREFKVFTNINSTVVDPKNFDPKSFVEIESDVCIIPPNSFALARTMEYFRIPRSVLTVCLGKSTYARCGIIVNVTPFEPEWEGHVTLEFSNTTPLPAKIYAGEGCAQVLFFESDEICETSYKDRGGKYQGQEGVTLPKI</sequence>
<keyword id="KW-0378">Hydrolase</keyword>
<keyword id="KW-0546">Nucleotide metabolism</keyword>
<keyword id="KW-0547">Nucleotide-binding</keyword>
<accession>Q47IJ7</accession>
<protein>
    <recommendedName>
        <fullName evidence="1">dCTP deaminase</fullName>
        <ecNumber evidence="1">3.5.4.13</ecNumber>
    </recommendedName>
    <alternativeName>
        <fullName evidence="1">Deoxycytidine triphosphate deaminase</fullName>
    </alternativeName>
</protein>